<protein>
    <recommendedName>
        <fullName>Tubulin alpha-B chain</fullName>
        <ecNumber evidence="2">3.6.5.-</ecNumber>
    </recommendedName>
</protein>
<accession>P38669</accession>
<accession>Q7RVI2</accession>
<proteinExistence type="evidence at transcript level"/>
<evidence type="ECO:0000250" key="1"/>
<evidence type="ECO:0000250" key="2">
    <source>
        <dbReference type="UniProtKB" id="P68363"/>
    </source>
</evidence>
<evidence type="ECO:0000305" key="3"/>
<name>TBA2_NEUCR</name>
<organism>
    <name type="scientific">Neurospora crassa (strain ATCC 24698 / 74-OR23-1A / CBS 708.71 / DSM 1257 / FGSC 987)</name>
    <dbReference type="NCBI Taxonomy" id="367110"/>
    <lineage>
        <taxon>Eukaryota</taxon>
        <taxon>Fungi</taxon>
        <taxon>Dikarya</taxon>
        <taxon>Ascomycota</taxon>
        <taxon>Pezizomycotina</taxon>
        <taxon>Sordariomycetes</taxon>
        <taxon>Sordariomycetidae</taxon>
        <taxon>Sordariales</taxon>
        <taxon>Sordariaceae</taxon>
        <taxon>Neurospora</taxon>
    </lineage>
</organism>
<dbReference type="EC" id="3.6.5.-" evidence="2"/>
<dbReference type="EMBL" id="X79404">
    <property type="protein sequence ID" value="CAA55941.1"/>
    <property type="molecule type" value="mRNA"/>
</dbReference>
<dbReference type="EMBL" id="BX842596">
    <property type="protein sequence ID" value="CAE75716.1"/>
    <property type="molecule type" value="Genomic_DNA"/>
</dbReference>
<dbReference type="EMBL" id="CM002237">
    <property type="protein sequence ID" value="EAA33987.1"/>
    <property type="molecule type" value="Genomic_DNA"/>
</dbReference>
<dbReference type="PIR" id="S45051">
    <property type="entry name" value="S45051"/>
</dbReference>
<dbReference type="RefSeq" id="XP_963223.1">
    <property type="nucleotide sequence ID" value="XM_958130.3"/>
</dbReference>
<dbReference type="SMR" id="P38669"/>
<dbReference type="FunCoup" id="P38669">
    <property type="interactions" value="1131"/>
</dbReference>
<dbReference type="STRING" id="367110.P38669"/>
<dbReference type="PaxDb" id="5141-EFNCRP00000009282"/>
<dbReference type="EnsemblFungi" id="EAA33987">
    <property type="protein sequence ID" value="EAA33987"/>
    <property type="gene ID" value="NCU09468"/>
</dbReference>
<dbReference type="GeneID" id="3879371"/>
<dbReference type="KEGG" id="ncr:NCU09468"/>
<dbReference type="VEuPathDB" id="FungiDB:NCU09468"/>
<dbReference type="HOGENOM" id="CLU_015718_1_0_1"/>
<dbReference type="InParanoid" id="P38669"/>
<dbReference type="OMA" id="YMASCIL"/>
<dbReference type="OrthoDB" id="1662883at2759"/>
<dbReference type="Proteomes" id="UP000001805">
    <property type="component" value="Chromosome 6, Linkage Group II"/>
</dbReference>
<dbReference type="GO" id="GO:0005737">
    <property type="term" value="C:cytoplasm"/>
    <property type="evidence" value="ECO:0000318"/>
    <property type="project" value="GO_Central"/>
</dbReference>
<dbReference type="GO" id="GO:0005874">
    <property type="term" value="C:microtubule"/>
    <property type="evidence" value="ECO:0000318"/>
    <property type="project" value="GO_Central"/>
</dbReference>
<dbReference type="GO" id="GO:0005634">
    <property type="term" value="C:nucleus"/>
    <property type="evidence" value="ECO:0000318"/>
    <property type="project" value="GO_Central"/>
</dbReference>
<dbReference type="GO" id="GO:0005819">
    <property type="term" value="C:spindle"/>
    <property type="evidence" value="ECO:0000318"/>
    <property type="project" value="GO_Central"/>
</dbReference>
<dbReference type="GO" id="GO:0005525">
    <property type="term" value="F:GTP binding"/>
    <property type="evidence" value="ECO:0000318"/>
    <property type="project" value="GO_Central"/>
</dbReference>
<dbReference type="GO" id="GO:0016787">
    <property type="term" value="F:hydrolase activity"/>
    <property type="evidence" value="ECO:0007669"/>
    <property type="project" value="UniProtKB-KW"/>
</dbReference>
<dbReference type="GO" id="GO:0046872">
    <property type="term" value="F:metal ion binding"/>
    <property type="evidence" value="ECO:0007669"/>
    <property type="project" value="UniProtKB-KW"/>
</dbReference>
<dbReference type="GO" id="GO:0005200">
    <property type="term" value="F:structural constituent of cytoskeleton"/>
    <property type="evidence" value="ECO:0000318"/>
    <property type="project" value="GO_Central"/>
</dbReference>
<dbReference type="GO" id="GO:0000226">
    <property type="term" value="P:microtubule cytoskeleton organization"/>
    <property type="evidence" value="ECO:0000318"/>
    <property type="project" value="GO_Central"/>
</dbReference>
<dbReference type="GO" id="GO:0000278">
    <property type="term" value="P:mitotic cell cycle"/>
    <property type="evidence" value="ECO:0000318"/>
    <property type="project" value="GO_Central"/>
</dbReference>
<dbReference type="GO" id="GO:0000280">
    <property type="term" value="P:nuclear division"/>
    <property type="evidence" value="ECO:0000318"/>
    <property type="project" value="GO_Central"/>
</dbReference>
<dbReference type="GO" id="GO:0098863">
    <property type="term" value="P:nuclear migration by microtubule mediated pushing forces"/>
    <property type="evidence" value="ECO:0000318"/>
    <property type="project" value="GO_Central"/>
</dbReference>
<dbReference type="CDD" id="cd02186">
    <property type="entry name" value="alpha_tubulin"/>
    <property type="match status" value="1"/>
</dbReference>
<dbReference type="FunFam" id="1.10.287.600:FF:000005">
    <property type="entry name" value="Tubulin alpha chain"/>
    <property type="match status" value="1"/>
</dbReference>
<dbReference type="FunFam" id="3.30.1330.20:FF:000001">
    <property type="entry name" value="Tubulin alpha chain"/>
    <property type="match status" value="1"/>
</dbReference>
<dbReference type="FunFam" id="3.40.50.1440:FF:000008">
    <property type="entry name" value="Tubulin alpha chain"/>
    <property type="match status" value="1"/>
</dbReference>
<dbReference type="Gene3D" id="1.10.287.600">
    <property type="entry name" value="Helix hairpin bin"/>
    <property type="match status" value="1"/>
</dbReference>
<dbReference type="Gene3D" id="3.30.1330.20">
    <property type="entry name" value="Tubulin/FtsZ, C-terminal domain"/>
    <property type="match status" value="1"/>
</dbReference>
<dbReference type="Gene3D" id="3.40.50.1440">
    <property type="entry name" value="Tubulin/FtsZ, GTPase domain"/>
    <property type="match status" value="1"/>
</dbReference>
<dbReference type="InterPro" id="IPR002452">
    <property type="entry name" value="Alpha_tubulin"/>
</dbReference>
<dbReference type="InterPro" id="IPR013838">
    <property type="entry name" value="Beta-tubulin_BS"/>
</dbReference>
<dbReference type="InterPro" id="IPR008280">
    <property type="entry name" value="Tub_FtsZ_C"/>
</dbReference>
<dbReference type="InterPro" id="IPR000217">
    <property type="entry name" value="Tubulin"/>
</dbReference>
<dbReference type="InterPro" id="IPR037103">
    <property type="entry name" value="Tubulin/FtsZ-like_C"/>
</dbReference>
<dbReference type="InterPro" id="IPR018316">
    <property type="entry name" value="Tubulin/FtsZ_2-layer-sand-dom"/>
</dbReference>
<dbReference type="InterPro" id="IPR036525">
    <property type="entry name" value="Tubulin/FtsZ_GTPase_sf"/>
</dbReference>
<dbReference type="InterPro" id="IPR023123">
    <property type="entry name" value="Tubulin_C"/>
</dbReference>
<dbReference type="InterPro" id="IPR017975">
    <property type="entry name" value="Tubulin_CS"/>
</dbReference>
<dbReference type="InterPro" id="IPR003008">
    <property type="entry name" value="Tubulin_FtsZ_GTPase"/>
</dbReference>
<dbReference type="PANTHER" id="PTHR11588">
    <property type="entry name" value="TUBULIN"/>
    <property type="match status" value="1"/>
</dbReference>
<dbReference type="Pfam" id="PF00091">
    <property type="entry name" value="Tubulin"/>
    <property type="match status" value="1"/>
</dbReference>
<dbReference type="Pfam" id="PF03953">
    <property type="entry name" value="Tubulin_C"/>
    <property type="match status" value="1"/>
</dbReference>
<dbReference type="PRINTS" id="PR01162">
    <property type="entry name" value="ALPHATUBULIN"/>
</dbReference>
<dbReference type="PRINTS" id="PR01161">
    <property type="entry name" value="TUBULIN"/>
</dbReference>
<dbReference type="SMART" id="SM00864">
    <property type="entry name" value="Tubulin"/>
    <property type="match status" value="1"/>
</dbReference>
<dbReference type="SMART" id="SM00865">
    <property type="entry name" value="Tubulin_C"/>
    <property type="match status" value="1"/>
</dbReference>
<dbReference type="SUPFAM" id="SSF55307">
    <property type="entry name" value="Tubulin C-terminal domain-like"/>
    <property type="match status" value="1"/>
</dbReference>
<dbReference type="SUPFAM" id="SSF52490">
    <property type="entry name" value="Tubulin nucleotide-binding domain-like"/>
    <property type="match status" value="1"/>
</dbReference>
<dbReference type="PROSITE" id="PS00227">
    <property type="entry name" value="TUBULIN"/>
    <property type="match status" value="1"/>
</dbReference>
<gene>
    <name type="primary">tba-2</name>
    <name type="ORF">B10K17.080</name>
    <name type="ORF">NCU09468</name>
</gene>
<keyword id="KW-0963">Cytoplasm</keyword>
<keyword id="KW-0206">Cytoskeleton</keyword>
<keyword id="KW-0342">GTP-binding</keyword>
<keyword id="KW-0378">Hydrolase</keyword>
<keyword id="KW-0460">Magnesium</keyword>
<keyword id="KW-0479">Metal-binding</keyword>
<keyword id="KW-0493">Microtubule</keyword>
<keyword id="KW-0547">Nucleotide-binding</keyword>
<keyword id="KW-1185">Reference proteome</keyword>
<feature type="chain" id="PRO_0000048200" description="Tubulin alpha-B chain">
    <location>
        <begin position="1"/>
        <end position="449"/>
    </location>
</feature>
<feature type="active site" evidence="2">
    <location>
        <position position="254"/>
    </location>
</feature>
<feature type="binding site" evidence="2">
    <location>
        <position position="11"/>
    </location>
    <ligand>
        <name>GTP</name>
        <dbReference type="ChEBI" id="CHEBI:37565"/>
    </ligand>
</feature>
<feature type="binding site" evidence="2">
    <location>
        <position position="71"/>
    </location>
    <ligand>
        <name>GTP</name>
        <dbReference type="ChEBI" id="CHEBI:37565"/>
    </ligand>
</feature>
<feature type="binding site" evidence="2">
    <location>
        <position position="71"/>
    </location>
    <ligand>
        <name>Mg(2+)</name>
        <dbReference type="ChEBI" id="CHEBI:18420"/>
    </ligand>
</feature>
<feature type="binding site" evidence="2">
    <location>
        <position position="140"/>
    </location>
    <ligand>
        <name>GTP</name>
        <dbReference type="ChEBI" id="CHEBI:37565"/>
    </ligand>
</feature>
<feature type="binding site" evidence="2">
    <location>
        <position position="144"/>
    </location>
    <ligand>
        <name>GTP</name>
        <dbReference type="ChEBI" id="CHEBI:37565"/>
    </ligand>
</feature>
<feature type="binding site" evidence="2">
    <location>
        <position position="145"/>
    </location>
    <ligand>
        <name>GTP</name>
        <dbReference type="ChEBI" id="CHEBI:37565"/>
    </ligand>
</feature>
<feature type="binding site" evidence="2">
    <location>
        <position position="179"/>
    </location>
    <ligand>
        <name>GTP</name>
        <dbReference type="ChEBI" id="CHEBI:37565"/>
    </ligand>
</feature>
<feature type="binding site" evidence="2">
    <location>
        <position position="206"/>
    </location>
    <ligand>
        <name>GTP</name>
        <dbReference type="ChEBI" id="CHEBI:37565"/>
    </ligand>
</feature>
<feature type="binding site" evidence="2">
    <location>
        <position position="228"/>
    </location>
    <ligand>
        <name>GTP</name>
        <dbReference type="ChEBI" id="CHEBI:37565"/>
    </ligand>
</feature>
<feature type="site" description="Involved in polymerization" evidence="1">
    <location>
        <position position="449"/>
    </location>
</feature>
<feature type="sequence conflict" description="In Ref. 1; CAA55941." evidence="3" ref="1">
    <original>KYV</original>
    <variation>NTF</variation>
    <location>
        <begin position="60"/>
        <end position="62"/>
    </location>
</feature>
<feature type="sequence conflict" description="In Ref. 1; CAA55941." evidence="3" ref="1">
    <original>HA</original>
    <variation>QRR</variation>
    <location>
        <begin position="197"/>
        <end position="198"/>
    </location>
</feature>
<feature type="sequence conflict" description="In Ref. 1; CAA55941." evidence="3" ref="1">
    <original>DLAKVNR</original>
    <variation>RSGPRLTD</variation>
    <location>
        <begin position="367"/>
        <end position="373"/>
    </location>
</feature>
<feature type="sequence conflict" description="In Ref. 1; CAA55941." evidence="3" ref="1">
    <original>LSSKF</original>
    <variation>SFVQV</variation>
    <location>
        <begin position="391"/>
        <end position="395"/>
    </location>
</feature>
<comment type="function">
    <text>Tubulin is the major constituent of microtubules, a cylinder consisting of laterally associated linear protofilaments composed of alpha- and beta-tubulin heterodimers. Microtubules grow by the addition of GTP-tubulin dimers to the microtubule end, where a stabilizing cap forms. Below the cap, tubulin dimers are in GDP-bound state, owing to GTPase activity of alpha-tubulin.</text>
</comment>
<comment type="catalytic activity">
    <reaction evidence="2">
        <text>GTP + H2O = GDP + phosphate + H(+)</text>
        <dbReference type="Rhea" id="RHEA:19669"/>
        <dbReference type="ChEBI" id="CHEBI:15377"/>
        <dbReference type="ChEBI" id="CHEBI:15378"/>
        <dbReference type="ChEBI" id="CHEBI:37565"/>
        <dbReference type="ChEBI" id="CHEBI:43474"/>
        <dbReference type="ChEBI" id="CHEBI:58189"/>
    </reaction>
    <physiologicalReaction direction="left-to-right" evidence="2">
        <dbReference type="Rhea" id="RHEA:19670"/>
    </physiologicalReaction>
</comment>
<comment type="cofactor">
    <cofactor evidence="2">
        <name>Mg(2+)</name>
        <dbReference type="ChEBI" id="CHEBI:18420"/>
    </cofactor>
</comment>
<comment type="subunit">
    <text>Dimer of alpha and beta chains. A typical microtubule is a hollow water-filled tube with an outer diameter of 25 nm and an inner diameter of 15 nM. Alpha-beta heterodimers associate head-to-tail to form protofilaments running lengthwise along the microtubule wall with the beta-tubulin subunit facing the microtubule plus end conferring a structural polarity. Microtubules usually have 13 protofilaments but different protofilament numbers can be found in some organisms and specialized cells.</text>
</comment>
<comment type="subcellular location">
    <subcellularLocation>
        <location>Cytoplasm</location>
        <location>Cytoskeleton</location>
    </subcellularLocation>
</comment>
<comment type="similarity">
    <text evidence="3">Belongs to the tubulin family.</text>
</comment>
<reference key="1">
    <citation type="journal article" date="1997" name="FEMS Microbiol. Lett.">
        <title>Molecular cloning and expression studies of two divergent alpha-tubulin genes in Neurospora crassa.</title>
        <authorList>
            <person name="Monnat J."/>
            <person name="Ortega Perez R."/>
            <person name="Turian G."/>
        </authorList>
    </citation>
    <scope>NUCLEOTIDE SEQUENCE [MRNA]</scope>
    <source>
        <strain>74-ORS-6a / FGSC 4200</strain>
    </source>
</reference>
<reference key="2">
    <citation type="journal article" date="2003" name="Nucleic Acids Res.">
        <title>What's in the genome of a filamentous fungus? Analysis of the Neurospora genome sequence.</title>
        <authorList>
            <person name="Mannhaupt G."/>
            <person name="Montrone C."/>
            <person name="Haase D."/>
            <person name="Mewes H.-W."/>
            <person name="Aign V."/>
            <person name="Hoheisel J.D."/>
            <person name="Fartmann B."/>
            <person name="Nyakatura G."/>
            <person name="Kempken F."/>
            <person name="Maier J."/>
            <person name="Schulte U."/>
        </authorList>
    </citation>
    <scope>NUCLEOTIDE SEQUENCE [LARGE SCALE GENOMIC DNA]</scope>
    <source>
        <strain>ATCC 24698 / 74-OR23-1A / CBS 708.71 / DSM 1257 / FGSC 987</strain>
    </source>
</reference>
<reference key="3">
    <citation type="journal article" date="2003" name="Nature">
        <title>The genome sequence of the filamentous fungus Neurospora crassa.</title>
        <authorList>
            <person name="Galagan J.E."/>
            <person name="Calvo S.E."/>
            <person name="Borkovich K.A."/>
            <person name="Selker E.U."/>
            <person name="Read N.D."/>
            <person name="Jaffe D.B."/>
            <person name="FitzHugh W."/>
            <person name="Ma L.-J."/>
            <person name="Smirnov S."/>
            <person name="Purcell S."/>
            <person name="Rehman B."/>
            <person name="Elkins T."/>
            <person name="Engels R."/>
            <person name="Wang S."/>
            <person name="Nielsen C.B."/>
            <person name="Butler J."/>
            <person name="Endrizzi M."/>
            <person name="Qui D."/>
            <person name="Ianakiev P."/>
            <person name="Bell-Pedersen D."/>
            <person name="Nelson M.A."/>
            <person name="Werner-Washburne M."/>
            <person name="Selitrennikoff C.P."/>
            <person name="Kinsey J.A."/>
            <person name="Braun E.L."/>
            <person name="Zelter A."/>
            <person name="Schulte U."/>
            <person name="Kothe G.O."/>
            <person name="Jedd G."/>
            <person name="Mewes H.-W."/>
            <person name="Staben C."/>
            <person name="Marcotte E."/>
            <person name="Greenberg D."/>
            <person name="Roy A."/>
            <person name="Foley K."/>
            <person name="Naylor J."/>
            <person name="Stange-Thomann N."/>
            <person name="Barrett R."/>
            <person name="Gnerre S."/>
            <person name="Kamal M."/>
            <person name="Kamvysselis M."/>
            <person name="Mauceli E.W."/>
            <person name="Bielke C."/>
            <person name="Rudd S."/>
            <person name="Frishman D."/>
            <person name="Krystofova S."/>
            <person name="Rasmussen C."/>
            <person name="Metzenberg R.L."/>
            <person name="Perkins D.D."/>
            <person name="Kroken S."/>
            <person name="Cogoni C."/>
            <person name="Macino G."/>
            <person name="Catcheside D.E.A."/>
            <person name="Li W."/>
            <person name="Pratt R.J."/>
            <person name="Osmani S.A."/>
            <person name="DeSouza C.P.C."/>
            <person name="Glass N.L."/>
            <person name="Orbach M.J."/>
            <person name="Berglund J.A."/>
            <person name="Voelker R."/>
            <person name="Yarden O."/>
            <person name="Plamann M."/>
            <person name="Seiler S."/>
            <person name="Dunlap J.C."/>
            <person name="Radford A."/>
            <person name="Aramayo R."/>
            <person name="Natvig D.O."/>
            <person name="Alex L.A."/>
            <person name="Mannhaupt G."/>
            <person name="Ebbole D.J."/>
            <person name="Freitag M."/>
            <person name="Paulsen I."/>
            <person name="Sachs M.S."/>
            <person name="Lander E.S."/>
            <person name="Nusbaum C."/>
            <person name="Birren B.W."/>
        </authorList>
    </citation>
    <scope>NUCLEOTIDE SEQUENCE [LARGE SCALE GENOMIC DNA]</scope>
    <source>
        <strain>ATCC 24698 / 74-OR23-1A / CBS 708.71 / DSM 1257 / FGSC 987</strain>
    </source>
</reference>
<sequence>MREIISLNVGQAGCQIANSCWELYCLEHGIQPDGYLTEERKAADPDHGFSTFFSETGNGKYVPRTIYADLEPNVIDEVRTGAYRGLFHPEHMISGKEDASNNYARGHYTVGKELIDQVLDKVRRVADNCSGLQGFLVFHSFGGGTGSGFGALLMERLSVDYGKKSKLEFCVYPAPQTATSVVEPYNSILTTHTTLEHADCSFMVDNEAIYDICRRNLGLERPNYENLNRLIAQVVSSITASLRFDGSLNVDLNEFQTNLVPYPRIHFPLVAYAPVISAAKAAHEANSVQEMTMSCFEPNNQMVKCDPRHGKYMATCLLYRGDVVPNDAHAAVATLKTKRTIQFVDWCPTGFKLGICYQPPHQVPNGDLAKVNRAVCMLSNTTAIAEAWSALSSKFDLMYSKRAFVHWYVGEGMEEGEFSEAREDLAALERDYEEVAADSMEGEDVEAEY</sequence>